<dbReference type="EMBL" id="CP001083">
    <property type="protein sequence ID" value="ACQ52038.1"/>
    <property type="molecule type" value="Genomic_DNA"/>
</dbReference>
<dbReference type="RefSeq" id="WP_003360098.1">
    <property type="nucleotide sequence ID" value="NC_012658.1"/>
</dbReference>
<dbReference type="SMR" id="C3KTD5"/>
<dbReference type="KEGG" id="cbi:CLJ_B3338"/>
<dbReference type="HOGENOM" id="CLU_062974_2_2_9"/>
<dbReference type="Proteomes" id="UP000002333">
    <property type="component" value="Chromosome"/>
</dbReference>
<dbReference type="GO" id="GO:0005829">
    <property type="term" value="C:cytosol"/>
    <property type="evidence" value="ECO:0007669"/>
    <property type="project" value="TreeGrafter"/>
</dbReference>
<dbReference type="GO" id="GO:0003677">
    <property type="term" value="F:DNA binding"/>
    <property type="evidence" value="ECO:0007669"/>
    <property type="project" value="UniProtKB-UniRule"/>
</dbReference>
<dbReference type="GO" id="GO:0006355">
    <property type="term" value="P:regulation of DNA-templated transcription"/>
    <property type="evidence" value="ECO:0007669"/>
    <property type="project" value="UniProtKB-UniRule"/>
</dbReference>
<dbReference type="FunFam" id="1.10.10.200:FF:000002">
    <property type="entry name" value="Probable transcriptional regulatory protein CLM62_37755"/>
    <property type="match status" value="1"/>
</dbReference>
<dbReference type="FunFam" id="3.30.70.980:FF:000002">
    <property type="entry name" value="Probable transcriptional regulatory protein YebC"/>
    <property type="match status" value="1"/>
</dbReference>
<dbReference type="Gene3D" id="1.10.10.200">
    <property type="match status" value="1"/>
</dbReference>
<dbReference type="Gene3D" id="3.30.70.980">
    <property type="match status" value="2"/>
</dbReference>
<dbReference type="HAMAP" id="MF_00693">
    <property type="entry name" value="Transcrip_reg_TACO1"/>
    <property type="match status" value="1"/>
</dbReference>
<dbReference type="InterPro" id="IPR017856">
    <property type="entry name" value="Integrase-like_N"/>
</dbReference>
<dbReference type="InterPro" id="IPR048300">
    <property type="entry name" value="TACO1_YebC-like_2nd/3rd_dom"/>
</dbReference>
<dbReference type="InterPro" id="IPR049083">
    <property type="entry name" value="TACO1_YebC_N"/>
</dbReference>
<dbReference type="InterPro" id="IPR002876">
    <property type="entry name" value="Transcrip_reg_TACO1-like"/>
</dbReference>
<dbReference type="InterPro" id="IPR026564">
    <property type="entry name" value="Transcrip_reg_TACO1-like_dom3"/>
</dbReference>
<dbReference type="InterPro" id="IPR029072">
    <property type="entry name" value="YebC-like"/>
</dbReference>
<dbReference type="NCBIfam" id="NF001030">
    <property type="entry name" value="PRK00110.1"/>
    <property type="match status" value="1"/>
</dbReference>
<dbReference type="NCBIfam" id="NF009044">
    <property type="entry name" value="PRK12378.1"/>
    <property type="match status" value="1"/>
</dbReference>
<dbReference type="NCBIfam" id="TIGR01033">
    <property type="entry name" value="YebC/PmpR family DNA-binding transcriptional regulator"/>
    <property type="match status" value="1"/>
</dbReference>
<dbReference type="PANTHER" id="PTHR12532:SF6">
    <property type="entry name" value="TRANSCRIPTIONAL REGULATORY PROTEIN YEBC-RELATED"/>
    <property type="match status" value="1"/>
</dbReference>
<dbReference type="PANTHER" id="PTHR12532">
    <property type="entry name" value="TRANSLATIONAL ACTIVATOR OF CYTOCHROME C OXIDASE 1"/>
    <property type="match status" value="1"/>
</dbReference>
<dbReference type="Pfam" id="PF20772">
    <property type="entry name" value="TACO1_YebC_N"/>
    <property type="match status" value="1"/>
</dbReference>
<dbReference type="Pfam" id="PF01709">
    <property type="entry name" value="Transcrip_reg"/>
    <property type="match status" value="1"/>
</dbReference>
<dbReference type="SUPFAM" id="SSF75625">
    <property type="entry name" value="YebC-like"/>
    <property type="match status" value="1"/>
</dbReference>
<comment type="subcellular location">
    <subcellularLocation>
        <location evidence="1">Cytoplasm</location>
    </subcellularLocation>
</comment>
<comment type="similarity">
    <text evidence="1">Belongs to the TACO1 family.</text>
</comment>
<keyword id="KW-0963">Cytoplasm</keyword>
<keyword id="KW-0238">DNA-binding</keyword>
<keyword id="KW-0804">Transcription</keyword>
<keyword id="KW-0805">Transcription regulation</keyword>
<organism>
    <name type="scientific">Clostridium botulinum (strain 657 / Type Ba4)</name>
    <dbReference type="NCBI Taxonomy" id="515621"/>
    <lineage>
        <taxon>Bacteria</taxon>
        <taxon>Bacillati</taxon>
        <taxon>Bacillota</taxon>
        <taxon>Clostridia</taxon>
        <taxon>Eubacteriales</taxon>
        <taxon>Clostridiaceae</taxon>
        <taxon>Clostridium</taxon>
    </lineage>
</organism>
<gene>
    <name type="ordered locus">CLJ_B3338</name>
</gene>
<evidence type="ECO:0000255" key="1">
    <source>
        <dbReference type="HAMAP-Rule" id="MF_00693"/>
    </source>
</evidence>
<protein>
    <recommendedName>
        <fullName evidence="1">Probable transcriptional regulatory protein CLJ_B3338</fullName>
    </recommendedName>
</protein>
<reference key="1">
    <citation type="submission" date="2008-05" db="EMBL/GenBank/DDBJ databases">
        <title>Genome sequence of Clostridium botulinum Ba4 strain 657.</title>
        <authorList>
            <person name="Shrivastava S."/>
            <person name="Brown J.L."/>
            <person name="Bruce D."/>
            <person name="Detter C."/>
            <person name="Munk C."/>
            <person name="Smith L.A."/>
            <person name="Smith T.J."/>
            <person name="Sutton G."/>
            <person name="Brettin T.S."/>
        </authorList>
    </citation>
    <scope>NUCLEOTIDE SEQUENCE [LARGE SCALE GENOMIC DNA]</scope>
    <source>
        <strain>657 / Type Ba4</strain>
    </source>
</reference>
<sequence>MSGHSKWHNIQAKKGKVDAKRGKIFTKIGKEIVVAVKQGGPSADSNPRLRDVIAKAKANNMPNDTIERSIKKASGELNAVDYETITYEGYGPAGIAVLVDVLTDNKNRSAGNVRYAFTKQGGNMGSTGCVSFMFQSKGQIVIEKKDGLDEDELMMMALDAGAEDFESEDEVYVVTTSQEDFGTVREALEAEGLEFLEAEIKMVPDTYTAIDEDTATKFQKMLDVLEDDDDVQNVYHNAEFPEGWEE</sequence>
<accession>C3KTD5</accession>
<proteinExistence type="inferred from homology"/>
<name>Y3338_CLOB6</name>
<feature type="chain" id="PRO_1000212601" description="Probable transcriptional regulatory protein CLJ_B3338">
    <location>
        <begin position="1"/>
        <end position="246"/>
    </location>
</feature>